<comment type="function">
    <text evidence="1">Accessory subunit of the mitochondrial membrane respiratory chain NADH dehydrogenase (Complex I), that is believed not to be involved in catalysis. Complex I functions in the transfer of electrons from NADH to the respiratory chain. The immediate electron acceptor for the enzyme is believed to be ubiquinone (By similarity).</text>
</comment>
<comment type="subunit">
    <text>Complex I is composed of at least 49 different subunits.</text>
</comment>
<comment type="subcellular location">
    <subcellularLocation>
        <location evidence="1">Mitochondrion inner membrane</location>
        <topology evidence="1">Peripheral membrane protein</topology>
        <orientation evidence="1">Matrix side</orientation>
    </subcellularLocation>
</comment>
<comment type="similarity">
    <text evidence="3">Belongs to the complex I NDUFB10 subunit family.</text>
</comment>
<comment type="sequence caution" evidence="3">
    <conflict type="erroneous gene model prediction">
        <sequence resource="EMBL-CDS" id="BAB01107"/>
    </conflict>
</comment>
<reference key="1">
    <citation type="journal article" date="2000" name="DNA Res.">
        <title>Structural analysis of Arabidopsis thaliana chromosome 3. I. Sequence features of the regions of 4,504,864 bp covered by sixty P1 and TAC clones.</title>
        <authorList>
            <person name="Sato S."/>
            <person name="Nakamura Y."/>
            <person name="Kaneko T."/>
            <person name="Katoh T."/>
            <person name="Asamizu E."/>
            <person name="Tabata S."/>
        </authorList>
    </citation>
    <scope>NUCLEOTIDE SEQUENCE [LARGE SCALE GENOMIC DNA]</scope>
    <source>
        <strain>cv. Columbia</strain>
    </source>
</reference>
<reference key="2">
    <citation type="journal article" date="2017" name="Plant J.">
        <title>Araport11: a complete reannotation of the Arabidopsis thaliana reference genome.</title>
        <authorList>
            <person name="Cheng C.Y."/>
            <person name="Krishnakumar V."/>
            <person name="Chan A.P."/>
            <person name="Thibaud-Nissen F."/>
            <person name="Schobel S."/>
            <person name="Town C.D."/>
        </authorList>
    </citation>
    <scope>GENOME REANNOTATION</scope>
    <source>
        <strain>cv. Columbia</strain>
    </source>
</reference>
<reference key="3">
    <citation type="journal article" date="2003" name="Science">
        <title>Empirical analysis of transcriptional activity in the Arabidopsis genome.</title>
        <authorList>
            <person name="Yamada K."/>
            <person name="Lim J."/>
            <person name="Dale J.M."/>
            <person name="Chen H."/>
            <person name="Shinn P."/>
            <person name="Palm C.J."/>
            <person name="Southwick A.M."/>
            <person name="Wu H.C."/>
            <person name="Kim C.J."/>
            <person name="Nguyen M."/>
            <person name="Pham P.K."/>
            <person name="Cheuk R.F."/>
            <person name="Karlin-Newmann G."/>
            <person name="Liu S.X."/>
            <person name="Lam B."/>
            <person name="Sakano H."/>
            <person name="Wu T."/>
            <person name="Yu G."/>
            <person name="Miranda M."/>
            <person name="Quach H.L."/>
            <person name="Tripp M."/>
            <person name="Chang C.H."/>
            <person name="Lee J.M."/>
            <person name="Toriumi M.J."/>
            <person name="Chan M.M."/>
            <person name="Tang C.C."/>
            <person name="Onodera C.S."/>
            <person name="Deng J.M."/>
            <person name="Akiyama K."/>
            <person name="Ansari Y."/>
            <person name="Arakawa T."/>
            <person name="Banh J."/>
            <person name="Banno F."/>
            <person name="Bowser L."/>
            <person name="Brooks S.Y."/>
            <person name="Carninci P."/>
            <person name="Chao Q."/>
            <person name="Choy N."/>
            <person name="Enju A."/>
            <person name="Goldsmith A.D."/>
            <person name="Gurjal M."/>
            <person name="Hansen N.F."/>
            <person name="Hayashizaki Y."/>
            <person name="Johnson-Hopson C."/>
            <person name="Hsuan V.W."/>
            <person name="Iida K."/>
            <person name="Karnes M."/>
            <person name="Khan S."/>
            <person name="Koesema E."/>
            <person name="Ishida J."/>
            <person name="Jiang P.X."/>
            <person name="Jones T."/>
            <person name="Kawai J."/>
            <person name="Kamiya A."/>
            <person name="Meyers C."/>
            <person name="Nakajima M."/>
            <person name="Narusaka M."/>
            <person name="Seki M."/>
            <person name="Sakurai T."/>
            <person name="Satou M."/>
            <person name="Tamse R."/>
            <person name="Vaysberg M."/>
            <person name="Wallender E.K."/>
            <person name="Wong C."/>
            <person name="Yamamura Y."/>
            <person name="Yuan S."/>
            <person name="Shinozaki K."/>
            <person name="Davis R.W."/>
            <person name="Theologis A."/>
            <person name="Ecker J.R."/>
        </authorList>
    </citation>
    <scope>NUCLEOTIDE SEQUENCE [LARGE SCALE MRNA]</scope>
    <source>
        <strain>cv. Columbia</strain>
    </source>
</reference>
<reference key="4">
    <citation type="submission" date="2002-03" db="EMBL/GenBank/DDBJ databases">
        <title>Full-length cDNA from Arabidopsis thaliana.</title>
        <authorList>
            <person name="Brover V.V."/>
            <person name="Troukhan M.E."/>
            <person name="Alexandrov N.A."/>
            <person name="Lu Y.-P."/>
            <person name="Flavell R.B."/>
            <person name="Feldmann K.A."/>
        </authorList>
    </citation>
    <scope>NUCLEOTIDE SEQUENCE [LARGE SCALE MRNA]</scope>
</reference>
<organism>
    <name type="scientific">Arabidopsis thaliana</name>
    <name type="common">Mouse-ear cress</name>
    <dbReference type="NCBI Taxonomy" id="3702"/>
    <lineage>
        <taxon>Eukaryota</taxon>
        <taxon>Viridiplantae</taxon>
        <taxon>Streptophyta</taxon>
        <taxon>Embryophyta</taxon>
        <taxon>Tracheophyta</taxon>
        <taxon>Spermatophyta</taxon>
        <taxon>Magnoliopsida</taxon>
        <taxon>eudicotyledons</taxon>
        <taxon>Gunneridae</taxon>
        <taxon>Pentapetalae</taxon>
        <taxon>rosids</taxon>
        <taxon>malvids</taxon>
        <taxon>Brassicales</taxon>
        <taxon>Brassicaceae</taxon>
        <taxon>Camelineae</taxon>
        <taxon>Arabidopsis</taxon>
    </lineage>
</organism>
<sequence>MGRKKGLPEFEESAPDGFDPENPYKDPVAMVEMREHIVREKWIQIEKAKILREKVKWCYRVEGVNHYQKCRHLVQQYLDSTRGVGWGKDHRPISLHGPKPEAVEAE</sequence>
<keyword id="KW-0002">3D-structure</keyword>
<keyword id="KW-0249">Electron transport</keyword>
<keyword id="KW-0472">Membrane</keyword>
<keyword id="KW-0496">Mitochondrion</keyword>
<keyword id="KW-0999">Mitochondrion inner membrane</keyword>
<keyword id="KW-1185">Reference proteome</keyword>
<keyword id="KW-0679">Respiratory chain</keyword>
<keyword id="KW-0813">Transport</keyword>
<gene>
    <name type="ordered locus">At3g18410</name>
    <name type="ORF">MYF24_12</name>
</gene>
<proteinExistence type="evidence at protein level"/>
<accession>Q94C12</accession>
<accession>Q9LS49</accession>
<feature type="chain" id="PRO_0000410680" description="NADH dehydrogenase [ubiquinone] 1 beta subcomplex subunit 10-B">
    <location>
        <begin position="1"/>
        <end position="106"/>
    </location>
</feature>
<feature type="region of interest" description="Disordered" evidence="2">
    <location>
        <begin position="1"/>
        <end position="25"/>
    </location>
</feature>
<feature type="strand" evidence="5">
    <location>
        <begin position="5"/>
        <end position="7"/>
    </location>
</feature>
<feature type="strand" evidence="5">
    <location>
        <begin position="23"/>
        <end position="25"/>
    </location>
</feature>
<feature type="helix" evidence="5">
    <location>
        <begin position="27"/>
        <end position="62"/>
    </location>
</feature>
<feature type="helix" evidence="5">
    <location>
        <begin position="63"/>
        <end position="65"/>
    </location>
</feature>
<feature type="helix" evidence="5">
    <location>
        <begin position="66"/>
        <end position="69"/>
    </location>
</feature>
<feature type="helix" evidence="5">
    <location>
        <begin position="71"/>
        <end position="81"/>
    </location>
</feature>
<feature type="strand" evidence="4">
    <location>
        <begin position="85"/>
        <end position="89"/>
    </location>
</feature>
<name>NDBAB_ARATH</name>
<dbReference type="EMBL" id="AB026658">
    <property type="protein sequence ID" value="BAB01107.1"/>
    <property type="status" value="ALT_SEQ"/>
    <property type="molecule type" value="Genomic_DNA"/>
</dbReference>
<dbReference type="EMBL" id="CP002686">
    <property type="protein sequence ID" value="AEE76093.1"/>
    <property type="molecule type" value="Genomic_DNA"/>
</dbReference>
<dbReference type="EMBL" id="CP002686">
    <property type="protein sequence ID" value="AEE76094.1"/>
    <property type="molecule type" value="Genomic_DNA"/>
</dbReference>
<dbReference type="EMBL" id="AY037256">
    <property type="protein sequence ID" value="AAK59857.1"/>
    <property type="molecule type" value="mRNA"/>
</dbReference>
<dbReference type="EMBL" id="AY077662">
    <property type="protein sequence ID" value="AAL76140.1"/>
    <property type="molecule type" value="mRNA"/>
</dbReference>
<dbReference type="EMBL" id="AY088400">
    <property type="protein sequence ID" value="AAM65938.1"/>
    <property type="molecule type" value="mRNA"/>
</dbReference>
<dbReference type="RefSeq" id="NP_001118655.1">
    <property type="nucleotide sequence ID" value="NM_001125183.2"/>
</dbReference>
<dbReference type="RefSeq" id="NP_566608.1">
    <property type="nucleotide sequence ID" value="NM_112726.4"/>
</dbReference>
<dbReference type="PDB" id="7AQW">
    <property type="method" value="EM"/>
    <property type="resolution" value="3.17 A"/>
    <property type="chains" value="p=1-106"/>
</dbReference>
<dbReference type="PDB" id="7AR7">
    <property type="method" value="EM"/>
    <property type="resolution" value="3.72 A"/>
    <property type="chains" value="p=2-94"/>
</dbReference>
<dbReference type="PDB" id="7AR8">
    <property type="method" value="EM"/>
    <property type="resolution" value="3.53 A"/>
    <property type="chains" value="p=1-106"/>
</dbReference>
<dbReference type="PDB" id="7ARB">
    <property type="method" value="EM"/>
    <property type="resolution" value="3.41 A"/>
    <property type="chains" value="p=1-106"/>
</dbReference>
<dbReference type="PDB" id="8BEH">
    <property type="method" value="EM"/>
    <property type="resolution" value="2.29 A"/>
    <property type="chains" value="p=1-106"/>
</dbReference>
<dbReference type="PDB" id="8BPX">
    <property type="method" value="EM"/>
    <property type="resolution" value="2.09 A"/>
    <property type="chains" value="p=1-106"/>
</dbReference>
<dbReference type="PDB" id="8BQ5">
    <property type="method" value="EM"/>
    <property type="resolution" value="2.73 A"/>
    <property type="chains" value="p=1-106"/>
</dbReference>
<dbReference type="PDB" id="8BQ6">
    <property type="method" value="EM"/>
    <property type="resolution" value="2.80 A"/>
    <property type="chains" value="p=1-106"/>
</dbReference>
<dbReference type="PDBsum" id="7AQW"/>
<dbReference type="PDBsum" id="7AR7"/>
<dbReference type="PDBsum" id="7AR8"/>
<dbReference type="PDBsum" id="7ARB"/>
<dbReference type="PDBsum" id="8BEH"/>
<dbReference type="PDBsum" id="8BPX"/>
<dbReference type="PDBsum" id="8BQ5"/>
<dbReference type="PDBsum" id="8BQ6"/>
<dbReference type="EMDB" id="EMD-11874"/>
<dbReference type="EMDB" id="EMD-11875"/>
<dbReference type="EMDB" id="EMD-11876"/>
<dbReference type="EMDB" id="EMD-11878"/>
<dbReference type="EMDB" id="EMD-16003"/>
<dbReference type="EMDB" id="EMD-16168"/>
<dbReference type="EMDB" id="EMD-16171"/>
<dbReference type="EMDB" id="EMD-16172"/>
<dbReference type="SMR" id="Q94C12"/>
<dbReference type="FunCoup" id="Q94C12">
    <property type="interactions" value="500"/>
</dbReference>
<dbReference type="IntAct" id="Q94C12">
    <property type="interactions" value="1"/>
</dbReference>
<dbReference type="STRING" id="3702.Q94C12"/>
<dbReference type="PaxDb" id="3702-AT3G18410.1"/>
<dbReference type="ProteomicsDB" id="251285"/>
<dbReference type="EnsemblPlants" id="AT3G18410.1">
    <property type="protein sequence ID" value="AT3G18410.1"/>
    <property type="gene ID" value="AT3G18410"/>
</dbReference>
<dbReference type="EnsemblPlants" id="AT3G18410.2">
    <property type="protein sequence ID" value="AT3G18410.2"/>
    <property type="gene ID" value="AT3G18410"/>
</dbReference>
<dbReference type="GeneID" id="821370"/>
<dbReference type="Gramene" id="AT3G18410.1">
    <property type="protein sequence ID" value="AT3G18410.1"/>
    <property type="gene ID" value="AT3G18410"/>
</dbReference>
<dbReference type="Gramene" id="AT3G18410.2">
    <property type="protein sequence ID" value="AT3G18410.2"/>
    <property type="gene ID" value="AT3G18410"/>
</dbReference>
<dbReference type="KEGG" id="ath:AT3G18410"/>
<dbReference type="Araport" id="AT3G18410"/>
<dbReference type="TAIR" id="AT3G18410"/>
<dbReference type="eggNOG" id="KOG4009">
    <property type="taxonomic scope" value="Eukaryota"/>
</dbReference>
<dbReference type="HOGENOM" id="CLU_145724_0_0_1"/>
<dbReference type="InParanoid" id="Q94C12"/>
<dbReference type="OMA" id="HELHGPK"/>
<dbReference type="OrthoDB" id="1021446at2759"/>
<dbReference type="PhylomeDB" id="Q94C12"/>
<dbReference type="PRO" id="PR:Q94C12"/>
<dbReference type="Proteomes" id="UP000006548">
    <property type="component" value="Chromosome 3"/>
</dbReference>
<dbReference type="ExpressionAtlas" id="Q94C12">
    <property type="expression patterns" value="baseline and differential"/>
</dbReference>
<dbReference type="GO" id="GO:0005829">
    <property type="term" value="C:cytosol"/>
    <property type="evidence" value="ECO:0007005"/>
    <property type="project" value="TAIR"/>
</dbReference>
<dbReference type="GO" id="GO:0005743">
    <property type="term" value="C:mitochondrial inner membrane"/>
    <property type="evidence" value="ECO:0007669"/>
    <property type="project" value="UniProtKB-SubCell"/>
</dbReference>
<dbReference type="GO" id="GO:0031966">
    <property type="term" value="C:mitochondrial membrane"/>
    <property type="evidence" value="ECO:0000314"/>
    <property type="project" value="TAIR"/>
</dbReference>
<dbReference type="GO" id="GO:0005739">
    <property type="term" value="C:mitochondrion"/>
    <property type="evidence" value="ECO:0000314"/>
    <property type="project" value="TAIR"/>
</dbReference>
<dbReference type="GO" id="GO:0045271">
    <property type="term" value="C:respiratory chain complex I"/>
    <property type="evidence" value="ECO:0000314"/>
    <property type="project" value="TAIR"/>
</dbReference>
<dbReference type="GO" id="GO:0009853">
    <property type="term" value="P:photorespiration"/>
    <property type="evidence" value="ECO:0000304"/>
    <property type="project" value="TAIR"/>
</dbReference>
<dbReference type="InterPro" id="IPR019377">
    <property type="entry name" value="NADH_UbQ_OxRdtase_su10"/>
</dbReference>
<dbReference type="InterPro" id="IPR039993">
    <property type="entry name" value="NDUFB10"/>
</dbReference>
<dbReference type="PANTHER" id="PTHR13094:SF1">
    <property type="entry name" value="NADH DEHYDROGENASE [UBIQUINONE] 1 BETA SUBCOMPLEX SUBUNIT 10"/>
    <property type="match status" value="1"/>
</dbReference>
<dbReference type="PANTHER" id="PTHR13094">
    <property type="entry name" value="NADH-UBIQUINONE OXIDOREDUCTASE PDSW SUBUNIT"/>
    <property type="match status" value="1"/>
</dbReference>
<dbReference type="Pfam" id="PF10249">
    <property type="entry name" value="NDUFB10"/>
    <property type="match status" value="1"/>
</dbReference>
<evidence type="ECO:0000250" key="1"/>
<evidence type="ECO:0000256" key="2">
    <source>
        <dbReference type="SAM" id="MobiDB-lite"/>
    </source>
</evidence>
<evidence type="ECO:0000305" key="3"/>
<evidence type="ECO:0007829" key="4">
    <source>
        <dbReference type="PDB" id="7AQW"/>
    </source>
</evidence>
<evidence type="ECO:0007829" key="5">
    <source>
        <dbReference type="PDB" id="8BEH"/>
    </source>
</evidence>
<protein>
    <recommendedName>
        <fullName>NADH dehydrogenase [ubiquinone] 1 beta subcomplex subunit 10-B</fullName>
    </recommendedName>
</protein>